<comment type="function">
    <text evidence="1">Binds directly to 23S rRNA. The L1 stalk is quite mobile in the ribosome, and is involved in E site tRNA release.</text>
</comment>
<comment type="function">
    <text evidence="1">Protein L1 is also a translational repressor protein, it controls the translation of the L11 operon by binding to its mRNA.</text>
</comment>
<comment type="subunit">
    <text evidence="1">Part of the 50S ribosomal subunit.</text>
</comment>
<comment type="similarity">
    <text evidence="1">Belongs to the universal ribosomal protein uL1 family.</text>
</comment>
<accession>A8EVZ7</accession>
<gene>
    <name evidence="1" type="primary">rplA</name>
    <name type="ordered locus">Abu_1887</name>
</gene>
<keyword id="KW-1185">Reference proteome</keyword>
<keyword id="KW-0678">Repressor</keyword>
<keyword id="KW-0687">Ribonucleoprotein</keyword>
<keyword id="KW-0689">Ribosomal protein</keyword>
<keyword id="KW-0694">RNA-binding</keyword>
<keyword id="KW-0699">rRNA-binding</keyword>
<keyword id="KW-0810">Translation regulation</keyword>
<keyword id="KW-0820">tRNA-binding</keyword>
<sequence length="232" mass="24637">MAKVSKRYKALAEKVEERKYSLAEACTTVRDLKSAKFDESVEIALNLNVDPRHADQMIRGAVVLPNGTGKTVRVAVFAKGVKLDEAKAAGADVVGNDDLAEAIQAGNINFDVLIATPDCMGIVGKVGRILGPKGLMPNPKTGTVTMDVTKAVNDAKGGQVTYRVDKKGNMQAAVGKVSFSAEAIKENVEAFVAAINKAKPSTAKGRYITNAAISLTMSPSIILDNMELMEIR</sequence>
<reference key="1">
    <citation type="journal article" date="2007" name="PLoS ONE">
        <title>The complete genome sequence and analysis of the Epsilonproteobacterium Arcobacter butzleri.</title>
        <authorList>
            <person name="Miller W.G."/>
            <person name="Parker C.T."/>
            <person name="Rubenfield M."/>
            <person name="Mendz G.L."/>
            <person name="Woesten M.M.S.M."/>
            <person name="Ussery D.W."/>
            <person name="Stolz J.F."/>
            <person name="Binnewies T.T."/>
            <person name="Hallin P.F."/>
            <person name="Wang G."/>
            <person name="Malek J.A."/>
            <person name="Rogosin A."/>
            <person name="Stanker L.H."/>
            <person name="Mandrell R.E."/>
        </authorList>
    </citation>
    <scope>NUCLEOTIDE SEQUENCE [LARGE SCALE GENOMIC DNA]</scope>
    <source>
        <strain>RM4018</strain>
    </source>
</reference>
<evidence type="ECO:0000255" key="1">
    <source>
        <dbReference type="HAMAP-Rule" id="MF_01318"/>
    </source>
</evidence>
<evidence type="ECO:0000305" key="2"/>
<protein>
    <recommendedName>
        <fullName evidence="1">Large ribosomal subunit protein uL1</fullName>
    </recommendedName>
    <alternativeName>
        <fullName evidence="2">50S ribosomal protein L1</fullName>
    </alternativeName>
</protein>
<organism>
    <name type="scientific">Aliarcobacter butzleri (strain RM4018)</name>
    <name type="common">Arcobacter butzleri</name>
    <dbReference type="NCBI Taxonomy" id="367737"/>
    <lineage>
        <taxon>Bacteria</taxon>
        <taxon>Pseudomonadati</taxon>
        <taxon>Campylobacterota</taxon>
        <taxon>Epsilonproteobacteria</taxon>
        <taxon>Campylobacterales</taxon>
        <taxon>Arcobacteraceae</taxon>
        <taxon>Aliarcobacter</taxon>
    </lineage>
</organism>
<name>RL1_ALIB4</name>
<feature type="chain" id="PRO_1000067526" description="Large ribosomal subunit protein uL1">
    <location>
        <begin position="1"/>
        <end position="232"/>
    </location>
</feature>
<dbReference type="EMBL" id="CP000361">
    <property type="protein sequence ID" value="ABV68120.1"/>
    <property type="molecule type" value="Genomic_DNA"/>
</dbReference>
<dbReference type="RefSeq" id="WP_004511257.1">
    <property type="nucleotide sequence ID" value="NC_009850.1"/>
</dbReference>
<dbReference type="SMR" id="A8EVZ7"/>
<dbReference type="STRING" id="367737.Abu_1887"/>
<dbReference type="GeneID" id="24304250"/>
<dbReference type="KEGG" id="abu:Abu_1887"/>
<dbReference type="eggNOG" id="COG0081">
    <property type="taxonomic scope" value="Bacteria"/>
</dbReference>
<dbReference type="HOGENOM" id="CLU_062853_0_0_7"/>
<dbReference type="Proteomes" id="UP000001136">
    <property type="component" value="Chromosome"/>
</dbReference>
<dbReference type="GO" id="GO:0022625">
    <property type="term" value="C:cytosolic large ribosomal subunit"/>
    <property type="evidence" value="ECO:0007669"/>
    <property type="project" value="TreeGrafter"/>
</dbReference>
<dbReference type="GO" id="GO:0019843">
    <property type="term" value="F:rRNA binding"/>
    <property type="evidence" value="ECO:0007669"/>
    <property type="project" value="UniProtKB-UniRule"/>
</dbReference>
<dbReference type="GO" id="GO:0003735">
    <property type="term" value="F:structural constituent of ribosome"/>
    <property type="evidence" value="ECO:0007669"/>
    <property type="project" value="InterPro"/>
</dbReference>
<dbReference type="GO" id="GO:0000049">
    <property type="term" value="F:tRNA binding"/>
    <property type="evidence" value="ECO:0007669"/>
    <property type="project" value="UniProtKB-KW"/>
</dbReference>
<dbReference type="GO" id="GO:0006417">
    <property type="term" value="P:regulation of translation"/>
    <property type="evidence" value="ECO:0007669"/>
    <property type="project" value="UniProtKB-KW"/>
</dbReference>
<dbReference type="GO" id="GO:0006412">
    <property type="term" value="P:translation"/>
    <property type="evidence" value="ECO:0007669"/>
    <property type="project" value="UniProtKB-UniRule"/>
</dbReference>
<dbReference type="CDD" id="cd00403">
    <property type="entry name" value="Ribosomal_L1"/>
    <property type="match status" value="1"/>
</dbReference>
<dbReference type="FunFam" id="3.40.50.790:FF:000001">
    <property type="entry name" value="50S ribosomal protein L1"/>
    <property type="match status" value="1"/>
</dbReference>
<dbReference type="Gene3D" id="3.30.190.20">
    <property type="match status" value="1"/>
</dbReference>
<dbReference type="Gene3D" id="3.40.50.790">
    <property type="match status" value="1"/>
</dbReference>
<dbReference type="HAMAP" id="MF_01318_B">
    <property type="entry name" value="Ribosomal_uL1_B"/>
    <property type="match status" value="1"/>
</dbReference>
<dbReference type="InterPro" id="IPR005878">
    <property type="entry name" value="Ribosom_uL1_bac-type"/>
</dbReference>
<dbReference type="InterPro" id="IPR002143">
    <property type="entry name" value="Ribosomal_uL1"/>
</dbReference>
<dbReference type="InterPro" id="IPR023674">
    <property type="entry name" value="Ribosomal_uL1-like"/>
</dbReference>
<dbReference type="InterPro" id="IPR028364">
    <property type="entry name" value="Ribosomal_uL1/biogenesis"/>
</dbReference>
<dbReference type="InterPro" id="IPR016095">
    <property type="entry name" value="Ribosomal_uL1_3-a/b-sand"/>
</dbReference>
<dbReference type="InterPro" id="IPR023673">
    <property type="entry name" value="Ribosomal_uL1_CS"/>
</dbReference>
<dbReference type="NCBIfam" id="TIGR01169">
    <property type="entry name" value="rplA_bact"/>
    <property type="match status" value="1"/>
</dbReference>
<dbReference type="PANTHER" id="PTHR36427">
    <property type="entry name" value="54S RIBOSOMAL PROTEIN L1, MITOCHONDRIAL"/>
    <property type="match status" value="1"/>
</dbReference>
<dbReference type="PANTHER" id="PTHR36427:SF3">
    <property type="entry name" value="LARGE RIBOSOMAL SUBUNIT PROTEIN UL1M"/>
    <property type="match status" value="1"/>
</dbReference>
<dbReference type="Pfam" id="PF00687">
    <property type="entry name" value="Ribosomal_L1"/>
    <property type="match status" value="1"/>
</dbReference>
<dbReference type="PIRSF" id="PIRSF002155">
    <property type="entry name" value="Ribosomal_L1"/>
    <property type="match status" value="1"/>
</dbReference>
<dbReference type="SUPFAM" id="SSF56808">
    <property type="entry name" value="Ribosomal protein L1"/>
    <property type="match status" value="1"/>
</dbReference>
<dbReference type="PROSITE" id="PS01199">
    <property type="entry name" value="RIBOSOMAL_L1"/>
    <property type="match status" value="1"/>
</dbReference>
<proteinExistence type="inferred from homology"/>